<gene>
    <name evidence="1" type="primary">lgt</name>
    <name type="ordered locus">SPD_1243</name>
</gene>
<feature type="chain" id="PRO_1000053509" description="Phosphatidylglycerol--prolipoprotein diacylglyceryl transferase">
    <location>
        <begin position="1"/>
        <end position="262"/>
    </location>
</feature>
<feature type="transmembrane region" description="Helical" evidence="1">
    <location>
        <begin position="9"/>
        <end position="29"/>
    </location>
</feature>
<feature type="transmembrane region" description="Helical" evidence="1">
    <location>
        <begin position="41"/>
        <end position="61"/>
    </location>
</feature>
<feature type="transmembrane region" description="Helical" evidence="1">
    <location>
        <begin position="80"/>
        <end position="100"/>
    </location>
</feature>
<feature type="transmembrane region" description="Helical" evidence="1">
    <location>
        <begin position="109"/>
        <end position="129"/>
    </location>
</feature>
<feature type="transmembrane region" description="Helical" evidence="1">
    <location>
        <begin position="167"/>
        <end position="187"/>
    </location>
</feature>
<feature type="transmembrane region" description="Helical" evidence="1">
    <location>
        <begin position="197"/>
        <end position="217"/>
    </location>
</feature>
<feature type="transmembrane region" description="Helical" evidence="1">
    <location>
        <begin position="226"/>
        <end position="246"/>
    </location>
</feature>
<feature type="binding site" evidence="1">
    <location>
        <position position="131"/>
    </location>
    <ligand>
        <name>a 1,2-diacyl-sn-glycero-3-phospho-(1'-sn-glycerol)</name>
        <dbReference type="ChEBI" id="CHEBI:64716"/>
    </ligand>
</feature>
<dbReference type="EC" id="2.5.1.145" evidence="1"/>
<dbReference type="EMBL" id="CP000410">
    <property type="protein sequence ID" value="ABJ54220.1"/>
    <property type="molecule type" value="Genomic_DNA"/>
</dbReference>
<dbReference type="RefSeq" id="WP_000886663.1">
    <property type="nucleotide sequence ID" value="NZ_JAMLJR010000005.1"/>
</dbReference>
<dbReference type="SMR" id="Q04JT8"/>
<dbReference type="PaxDb" id="373153-SPD_1243"/>
<dbReference type="GeneID" id="45653330"/>
<dbReference type="KEGG" id="spd:SPD_1243"/>
<dbReference type="eggNOG" id="COG0682">
    <property type="taxonomic scope" value="Bacteria"/>
</dbReference>
<dbReference type="HOGENOM" id="CLU_013386_0_1_9"/>
<dbReference type="BioCyc" id="SPNE373153:G1G6V-1343-MONOMER"/>
<dbReference type="UniPathway" id="UPA00664"/>
<dbReference type="Proteomes" id="UP000001452">
    <property type="component" value="Chromosome"/>
</dbReference>
<dbReference type="GO" id="GO:0005886">
    <property type="term" value="C:plasma membrane"/>
    <property type="evidence" value="ECO:0007669"/>
    <property type="project" value="UniProtKB-SubCell"/>
</dbReference>
<dbReference type="GO" id="GO:0008961">
    <property type="term" value="F:phosphatidylglycerol-prolipoprotein diacylglyceryl transferase activity"/>
    <property type="evidence" value="ECO:0007669"/>
    <property type="project" value="UniProtKB-UniRule"/>
</dbReference>
<dbReference type="GO" id="GO:0042158">
    <property type="term" value="P:lipoprotein biosynthetic process"/>
    <property type="evidence" value="ECO:0007669"/>
    <property type="project" value="UniProtKB-UniRule"/>
</dbReference>
<dbReference type="HAMAP" id="MF_01147">
    <property type="entry name" value="Lgt"/>
    <property type="match status" value="1"/>
</dbReference>
<dbReference type="InterPro" id="IPR001640">
    <property type="entry name" value="Lgt"/>
</dbReference>
<dbReference type="NCBIfam" id="TIGR00544">
    <property type="entry name" value="lgt"/>
    <property type="match status" value="1"/>
</dbReference>
<dbReference type="PANTHER" id="PTHR30589:SF0">
    <property type="entry name" value="PHOSPHATIDYLGLYCEROL--PROLIPOPROTEIN DIACYLGLYCERYL TRANSFERASE"/>
    <property type="match status" value="1"/>
</dbReference>
<dbReference type="PANTHER" id="PTHR30589">
    <property type="entry name" value="PROLIPOPROTEIN DIACYLGLYCERYL TRANSFERASE"/>
    <property type="match status" value="1"/>
</dbReference>
<dbReference type="Pfam" id="PF01790">
    <property type="entry name" value="LGT"/>
    <property type="match status" value="1"/>
</dbReference>
<dbReference type="PROSITE" id="PS01311">
    <property type="entry name" value="LGT"/>
    <property type="match status" value="1"/>
</dbReference>
<keyword id="KW-1003">Cell membrane</keyword>
<keyword id="KW-0472">Membrane</keyword>
<keyword id="KW-1185">Reference proteome</keyword>
<keyword id="KW-0808">Transferase</keyword>
<keyword id="KW-0812">Transmembrane</keyword>
<keyword id="KW-1133">Transmembrane helix</keyword>
<reference key="1">
    <citation type="journal article" date="2007" name="J. Bacteriol.">
        <title>Genome sequence of Avery's virulent serotype 2 strain D39 of Streptococcus pneumoniae and comparison with that of unencapsulated laboratory strain R6.</title>
        <authorList>
            <person name="Lanie J.A."/>
            <person name="Ng W.-L."/>
            <person name="Kazmierczak K.M."/>
            <person name="Andrzejewski T.M."/>
            <person name="Davidsen T.M."/>
            <person name="Wayne K.J."/>
            <person name="Tettelin H."/>
            <person name="Glass J.I."/>
            <person name="Winkler M.E."/>
        </authorList>
    </citation>
    <scope>NUCLEOTIDE SEQUENCE [LARGE SCALE GENOMIC DNA]</scope>
    <source>
        <strain>D39 / NCTC 7466</strain>
    </source>
</reference>
<accession>Q04JT8</accession>
<comment type="function">
    <text evidence="1">Catalyzes the transfer of the diacylglyceryl group from phosphatidylglycerol to the sulfhydryl group of the N-terminal cysteine of a prolipoprotein, the first step in the formation of mature lipoproteins.</text>
</comment>
<comment type="catalytic activity">
    <reaction evidence="1">
        <text>L-cysteinyl-[prolipoprotein] + a 1,2-diacyl-sn-glycero-3-phospho-(1'-sn-glycerol) = an S-1,2-diacyl-sn-glyceryl-L-cysteinyl-[prolipoprotein] + sn-glycerol 1-phosphate + H(+)</text>
        <dbReference type="Rhea" id="RHEA:56712"/>
        <dbReference type="Rhea" id="RHEA-COMP:14679"/>
        <dbReference type="Rhea" id="RHEA-COMP:14680"/>
        <dbReference type="ChEBI" id="CHEBI:15378"/>
        <dbReference type="ChEBI" id="CHEBI:29950"/>
        <dbReference type="ChEBI" id="CHEBI:57685"/>
        <dbReference type="ChEBI" id="CHEBI:64716"/>
        <dbReference type="ChEBI" id="CHEBI:140658"/>
        <dbReference type="EC" id="2.5.1.145"/>
    </reaction>
</comment>
<comment type="pathway">
    <text evidence="1">Protein modification; lipoprotein biosynthesis (diacylglyceryl transfer).</text>
</comment>
<comment type="subcellular location">
    <subcellularLocation>
        <location evidence="1">Cell membrane</location>
        <topology evidence="1">Multi-pass membrane protein</topology>
    </subcellularLocation>
</comment>
<comment type="similarity">
    <text evidence="1">Belongs to the Lgt family.</text>
</comment>
<proteinExistence type="inferred from homology"/>
<name>LGT_STRP2</name>
<organism>
    <name type="scientific">Streptococcus pneumoniae serotype 2 (strain D39 / NCTC 7466)</name>
    <dbReference type="NCBI Taxonomy" id="373153"/>
    <lineage>
        <taxon>Bacteria</taxon>
        <taxon>Bacillati</taxon>
        <taxon>Bacillota</taxon>
        <taxon>Bacilli</taxon>
        <taxon>Lactobacillales</taxon>
        <taxon>Streptococcaceae</taxon>
        <taxon>Streptococcus</taxon>
    </lineage>
</organism>
<protein>
    <recommendedName>
        <fullName evidence="1">Phosphatidylglycerol--prolipoprotein diacylglyceryl transferase</fullName>
        <ecNumber evidence="1">2.5.1.145</ecNumber>
    </recommendedName>
</protein>
<evidence type="ECO:0000255" key="1">
    <source>
        <dbReference type="HAMAP-Rule" id="MF_01147"/>
    </source>
</evidence>
<sequence>MLDPIAIQLGPLAIRWYALCIVTGLILAVYLTMKEAPRKKIIPDDILDFILVAFPLAILGARLYYVIFRFDYYSQNLGEIFAIWNGGLAIYGGLITGALVLYIFADRKLINTWDFLDIAAPSVMIAQSLGRWGNFFNQEAYGATVDNLDYLPGFIRDQMYIEGSYRQPTFLYESLWNLLGFALILIFRRKWKSLRRGHITAFYLIWYGFGRMVIEGMRTDSLMFFGLRVSQWLSVVLIGLGIMIVIYQNRKKAPYYITEEEN</sequence>